<evidence type="ECO:0000255" key="1">
    <source>
        <dbReference type="HAMAP-Rule" id="MF_02111"/>
    </source>
</evidence>
<evidence type="ECO:0000305" key="2"/>
<comment type="function">
    <text evidence="1">Catalyzes the covalent attachment of the prokaryotic ubiquitin-like protein modifier Pup to the proteasomal substrate proteins, thereby targeting them for proteasomal degradation. This tagging system is termed pupylation. The ligation reaction involves the side-chain carboxylate of the C-terminal glutamate of Pup and the side-chain amino group of a substrate lysine.</text>
</comment>
<comment type="catalytic activity">
    <reaction evidence="1">
        <text>ATP + [prokaryotic ubiquitin-like protein]-L-glutamate + [protein]-L-lysine = ADP + phosphate + N(6)-([prokaryotic ubiquitin-like protein]-gamma-L-glutamyl)-[protein]-L-lysine.</text>
        <dbReference type="EC" id="6.3.1.19"/>
    </reaction>
</comment>
<comment type="pathway">
    <text evidence="1">Protein degradation; proteasomal Pup-dependent pathway.</text>
</comment>
<comment type="pathway">
    <text evidence="1">Protein modification; protein pupylation.</text>
</comment>
<comment type="miscellaneous">
    <text evidence="1">The reaction mechanism probably proceeds via the activation of Pup by phosphorylation of its C-terminal glutamate, which is then subject to nucleophilic attack by the substrate lysine, resulting in an isopeptide bond and the release of phosphate as a good leaving group.</text>
</comment>
<comment type="similarity">
    <text evidence="1">Belongs to the Pup ligase/Pup deamidase family. Pup-conjugating enzyme subfamily.</text>
</comment>
<comment type="sequence caution" evidence="2">
    <conflict type="erroneous initiation">
        <sequence resource="EMBL-CDS" id="ABG92674"/>
    </conflict>
    <text>Truncated N-terminus.</text>
</comment>
<accession>Q0SIG2</accession>
<sequence>MQRRIMGIETEFGVTCTFHGHRRLSPDEVARYLFRRVVSWGRSSNVFLRNGARLYLDVGSHPEYATAECDNLIQLVNHDRAGERVLEELLIDAEQRLAEEGIGGDIYLFKNNTDSAGNSYGCHENFLVARAGEFSRISDVLLPFLVTRQLICGAGKVLQTPKAATFCLSQRAEHIWEGVSSATTRSRPIINTRDEPHADAEKYRRLHVIVGDSNMSESTTMLKVGTAALVLEMIEAGVSFRDFALDNPIRAIREVSHDVTGRRPVRLAGGRQASALDIQREYHARAVEHLQNRDPDPQVTQVVDLWGRMLDAVETQDFAKVDTEIDWVIKRKLFQRYQDRHGFELADPKIAQLDLAYHDIKRGRGVFDVLQRKGLVKRITEDETIEAAVDTPPQTTRAKLRGEFITAAQEAGRDFTVDWVHLKLNDQAQRTVLCKDPFRSVDERVERLIASM</sequence>
<feature type="chain" id="PRO_0000395948" description="Pup--protein ligase">
    <location>
        <begin position="1"/>
        <end position="452"/>
    </location>
</feature>
<feature type="active site" description="Proton acceptor" evidence="1">
    <location>
        <position position="57"/>
    </location>
</feature>
<feature type="binding site" evidence="1">
    <location>
        <position position="9"/>
    </location>
    <ligand>
        <name>Mg(2+)</name>
        <dbReference type="ChEBI" id="CHEBI:18420"/>
    </ligand>
</feature>
<feature type="binding site" evidence="1">
    <location>
        <position position="53"/>
    </location>
    <ligand>
        <name>ATP</name>
        <dbReference type="ChEBI" id="CHEBI:30616"/>
    </ligand>
</feature>
<feature type="binding site" evidence="1">
    <location>
        <position position="55"/>
    </location>
    <ligand>
        <name>Mg(2+)</name>
        <dbReference type="ChEBI" id="CHEBI:18420"/>
    </ligand>
</feature>
<feature type="binding site" evidence="1">
    <location>
        <position position="63"/>
    </location>
    <ligand>
        <name>Mg(2+)</name>
        <dbReference type="ChEBI" id="CHEBI:18420"/>
    </ligand>
</feature>
<feature type="binding site" evidence="1">
    <location>
        <position position="66"/>
    </location>
    <ligand>
        <name>ATP</name>
        <dbReference type="ChEBI" id="CHEBI:30616"/>
    </ligand>
</feature>
<feature type="binding site" evidence="1">
    <location>
        <position position="419"/>
    </location>
    <ligand>
        <name>ATP</name>
        <dbReference type="ChEBI" id="CHEBI:30616"/>
    </ligand>
</feature>
<organism>
    <name type="scientific">Rhodococcus jostii (strain RHA1)</name>
    <dbReference type="NCBI Taxonomy" id="101510"/>
    <lineage>
        <taxon>Bacteria</taxon>
        <taxon>Bacillati</taxon>
        <taxon>Actinomycetota</taxon>
        <taxon>Actinomycetes</taxon>
        <taxon>Mycobacteriales</taxon>
        <taxon>Nocardiaceae</taxon>
        <taxon>Rhodococcus</taxon>
    </lineage>
</organism>
<dbReference type="EC" id="6.3.1.19" evidence="1"/>
<dbReference type="EMBL" id="CP000431">
    <property type="protein sequence ID" value="ABG92674.1"/>
    <property type="status" value="ALT_INIT"/>
    <property type="molecule type" value="Genomic_DNA"/>
</dbReference>
<dbReference type="SMR" id="Q0SIG2"/>
<dbReference type="KEGG" id="rha:RHA1_ro00841"/>
<dbReference type="eggNOG" id="COG0638">
    <property type="taxonomic scope" value="Bacteria"/>
</dbReference>
<dbReference type="HOGENOM" id="CLU_040524_0_1_11"/>
<dbReference type="UniPathway" id="UPA00997"/>
<dbReference type="UniPathway" id="UPA00998"/>
<dbReference type="Proteomes" id="UP000008710">
    <property type="component" value="Chromosome"/>
</dbReference>
<dbReference type="GO" id="GO:0005524">
    <property type="term" value="F:ATP binding"/>
    <property type="evidence" value="ECO:0007669"/>
    <property type="project" value="UniProtKB-UniRule"/>
</dbReference>
<dbReference type="GO" id="GO:0016879">
    <property type="term" value="F:ligase activity, forming carbon-nitrogen bonds"/>
    <property type="evidence" value="ECO:0007669"/>
    <property type="project" value="InterPro"/>
</dbReference>
<dbReference type="GO" id="GO:0000287">
    <property type="term" value="F:magnesium ion binding"/>
    <property type="evidence" value="ECO:0007669"/>
    <property type="project" value="UniProtKB-UniRule"/>
</dbReference>
<dbReference type="GO" id="GO:0019787">
    <property type="term" value="F:ubiquitin-like protein transferase activity"/>
    <property type="evidence" value="ECO:0007669"/>
    <property type="project" value="UniProtKB-UniRule"/>
</dbReference>
<dbReference type="GO" id="GO:0019941">
    <property type="term" value="P:modification-dependent protein catabolic process"/>
    <property type="evidence" value="ECO:0007669"/>
    <property type="project" value="UniProtKB-UniRule"/>
</dbReference>
<dbReference type="GO" id="GO:0010498">
    <property type="term" value="P:proteasomal protein catabolic process"/>
    <property type="evidence" value="ECO:0007669"/>
    <property type="project" value="UniProtKB-UniRule"/>
</dbReference>
<dbReference type="GO" id="GO:0070490">
    <property type="term" value="P:protein pupylation"/>
    <property type="evidence" value="ECO:0007669"/>
    <property type="project" value="UniProtKB-UniRule"/>
</dbReference>
<dbReference type="HAMAP" id="MF_02111">
    <property type="entry name" value="Pup_ligase"/>
    <property type="match status" value="1"/>
</dbReference>
<dbReference type="InterPro" id="IPR022279">
    <property type="entry name" value="Pup_ligase"/>
</dbReference>
<dbReference type="InterPro" id="IPR004347">
    <property type="entry name" value="Pup_ligase/deamidase"/>
</dbReference>
<dbReference type="NCBIfam" id="TIGR03686">
    <property type="entry name" value="pupylate_PafA"/>
    <property type="match status" value="1"/>
</dbReference>
<dbReference type="PANTHER" id="PTHR42307">
    <property type="entry name" value="PUP DEAMIDASE/DEPUPYLASE"/>
    <property type="match status" value="1"/>
</dbReference>
<dbReference type="PANTHER" id="PTHR42307:SF3">
    <property type="entry name" value="PUP--PROTEIN LIGASE"/>
    <property type="match status" value="1"/>
</dbReference>
<dbReference type="Pfam" id="PF03136">
    <property type="entry name" value="Pup_ligase"/>
    <property type="match status" value="1"/>
</dbReference>
<dbReference type="PIRSF" id="PIRSF018077">
    <property type="entry name" value="UCP018077"/>
    <property type="match status" value="1"/>
</dbReference>
<keyword id="KW-0067">ATP-binding</keyword>
<keyword id="KW-0436">Ligase</keyword>
<keyword id="KW-0460">Magnesium</keyword>
<keyword id="KW-0479">Metal-binding</keyword>
<keyword id="KW-0547">Nucleotide-binding</keyword>
<keyword id="KW-0833">Ubl conjugation pathway</keyword>
<proteinExistence type="inferred from homology"/>
<reference key="1">
    <citation type="journal article" date="2006" name="Proc. Natl. Acad. Sci. U.S.A.">
        <title>The complete genome of Rhodococcus sp. RHA1 provides insights into a catabolic powerhouse.</title>
        <authorList>
            <person name="McLeod M.P."/>
            <person name="Warren R.L."/>
            <person name="Hsiao W.W.L."/>
            <person name="Araki N."/>
            <person name="Myhre M."/>
            <person name="Fernandes C."/>
            <person name="Miyazawa D."/>
            <person name="Wong W."/>
            <person name="Lillquist A.L."/>
            <person name="Wang D."/>
            <person name="Dosanjh M."/>
            <person name="Hara H."/>
            <person name="Petrescu A."/>
            <person name="Morin R.D."/>
            <person name="Yang G."/>
            <person name="Stott J.M."/>
            <person name="Schein J.E."/>
            <person name="Shin H."/>
            <person name="Smailus D."/>
            <person name="Siddiqui A.S."/>
            <person name="Marra M.A."/>
            <person name="Jones S.J.M."/>
            <person name="Holt R."/>
            <person name="Brinkman F.S.L."/>
            <person name="Miyauchi K."/>
            <person name="Fukuda M."/>
            <person name="Davies J.E."/>
            <person name="Mohn W.W."/>
            <person name="Eltis L.D."/>
        </authorList>
    </citation>
    <scope>NUCLEOTIDE SEQUENCE [LARGE SCALE GENOMIC DNA]</scope>
    <source>
        <strain>RHA1</strain>
    </source>
</reference>
<gene>
    <name evidence="1" type="primary">pafA</name>
    <name type="ordered locus">RHA1_ro00841</name>
</gene>
<name>PAFA_RHOJR</name>
<protein>
    <recommendedName>
        <fullName evidence="1">Pup--protein ligase</fullName>
        <ecNumber evidence="1">6.3.1.19</ecNumber>
    </recommendedName>
    <alternativeName>
        <fullName evidence="1">Proteasome accessory factor A</fullName>
    </alternativeName>
    <alternativeName>
        <fullName evidence="1">Pup-conjugating enzyme</fullName>
    </alternativeName>
</protein>